<evidence type="ECO:0000255" key="1">
    <source>
        <dbReference type="HAMAP-Rule" id="MF_00184"/>
    </source>
</evidence>
<evidence type="ECO:0000255" key="2">
    <source>
        <dbReference type="PROSITE-ProRule" id="PRU01228"/>
    </source>
</evidence>
<dbReference type="EC" id="6.1.1.3" evidence="1"/>
<dbReference type="EMBL" id="CP000931">
    <property type="protein sequence ID" value="ABZ76581.1"/>
    <property type="molecule type" value="Genomic_DNA"/>
</dbReference>
<dbReference type="RefSeq" id="WP_012277113.1">
    <property type="nucleotide sequence ID" value="NC_010334.1"/>
</dbReference>
<dbReference type="SMR" id="B0TT20"/>
<dbReference type="STRING" id="458817.Shal_2020"/>
<dbReference type="KEGG" id="shl:Shal_2020"/>
<dbReference type="eggNOG" id="COG0441">
    <property type="taxonomic scope" value="Bacteria"/>
</dbReference>
<dbReference type="HOGENOM" id="CLU_008554_0_1_6"/>
<dbReference type="OrthoDB" id="9802304at2"/>
<dbReference type="Proteomes" id="UP000001317">
    <property type="component" value="Chromosome"/>
</dbReference>
<dbReference type="GO" id="GO:0005829">
    <property type="term" value="C:cytosol"/>
    <property type="evidence" value="ECO:0007669"/>
    <property type="project" value="TreeGrafter"/>
</dbReference>
<dbReference type="GO" id="GO:0005524">
    <property type="term" value="F:ATP binding"/>
    <property type="evidence" value="ECO:0007669"/>
    <property type="project" value="UniProtKB-UniRule"/>
</dbReference>
<dbReference type="GO" id="GO:0046872">
    <property type="term" value="F:metal ion binding"/>
    <property type="evidence" value="ECO:0007669"/>
    <property type="project" value="UniProtKB-KW"/>
</dbReference>
<dbReference type="GO" id="GO:0004829">
    <property type="term" value="F:threonine-tRNA ligase activity"/>
    <property type="evidence" value="ECO:0007669"/>
    <property type="project" value="UniProtKB-UniRule"/>
</dbReference>
<dbReference type="GO" id="GO:0000049">
    <property type="term" value="F:tRNA binding"/>
    <property type="evidence" value="ECO:0007669"/>
    <property type="project" value="UniProtKB-KW"/>
</dbReference>
<dbReference type="GO" id="GO:0006435">
    <property type="term" value="P:threonyl-tRNA aminoacylation"/>
    <property type="evidence" value="ECO:0007669"/>
    <property type="project" value="UniProtKB-UniRule"/>
</dbReference>
<dbReference type="CDD" id="cd01667">
    <property type="entry name" value="TGS_ThrRS"/>
    <property type="match status" value="1"/>
</dbReference>
<dbReference type="CDD" id="cd00860">
    <property type="entry name" value="ThrRS_anticodon"/>
    <property type="match status" value="1"/>
</dbReference>
<dbReference type="CDD" id="cd00771">
    <property type="entry name" value="ThrRS_core"/>
    <property type="match status" value="1"/>
</dbReference>
<dbReference type="FunFam" id="3.10.20.30:FF:000005">
    <property type="entry name" value="Threonine--tRNA ligase"/>
    <property type="match status" value="1"/>
</dbReference>
<dbReference type="FunFam" id="3.30.54.20:FF:000002">
    <property type="entry name" value="Threonine--tRNA ligase"/>
    <property type="match status" value="1"/>
</dbReference>
<dbReference type="FunFam" id="3.30.930.10:FF:000002">
    <property type="entry name" value="Threonine--tRNA ligase"/>
    <property type="match status" value="1"/>
</dbReference>
<dbReference type="FunFam" id="3.40.50.800:FF:000001">
    <property type="entry name" value="Threonine--tRNA ligase"/>
    <property type="match status" value="1"/>
</dbReference>
<dbReference type="FunFam" id="3.30.980.10:FF:000005">
    <property type="entry name" value="Threonyl-tRNA synthetase, mitochondrial"/>
    <property type="match status" value="1"/>
</dbReference>
<dbReference type="Gene3D" id="3.10.20.30">
    <property type="match status" value="1"/>
</dbReference>
<dbReference type="Gene3D" id="3.30.54.20">
    <property type="match status" value="1"/>
</dbReference>
<dbReference type="Gene3D" id="3.40.50.800">
    <property type="entry name" value="Anticodon-binding domain"/>
    <property type="match status" value="1"/>
</dbReference>
<dbReference type="Gene3D" id="3.30.930.10">
    <property type="entry name" value="Bira Bifunctional Protein, Domain 2"/>
    <property type="match status" value="1"/>
</dbReference>
<dbReference type="Gene3D" id="3.30.980.10">
    <property type="entry name" value="Threonyl-trna Synthetase, Chain A, domain 2"/>
    <property type="match status" value="1"/>
</dbReference>
<dbReference type="HAMAP" id="MF_00184">
    <property type="entry name" value="Thr_tRNA_synth"/>
    <property type="match status" value="1"/>
</dbReference>
<dbReference type="InterPro" id="IPR002314">
    <property type="entry name" value="aa-tRNA-synt_IIb"/>
</dbReference>
<dbReference type="InterPro" id="IPR006195">
    <property type="entry name" value="aa-tRNA-synth_II"/>
</dbReference>
<dbReference type="InterPro" id="IPR045864">
    <property type="entry name" value="aa-tRNA-synth_II/BPL/LPL"/>
</dbReference>
<dbReference type="InterPro" id="IPR004154">
    <property type="entry name" value="Anticodon-bd"/>
</dbReference>
<dbReference type="InterPro" id="IPR036621">
    <property type="entry name" value="Anticodon-bd_dom_sf"/>
</dbReference>
<dbReference type="InterPro" id="IPR012675">
    <property type="entry name" value="Beta-grasp_dom_sf"/>
</dbReference>
<dbReference type="InterPro" id="IPR004095">
    <property type="entry name" value="TGS"/>
</dbReference>
<dbReference type="InterPro" id="IPR012676">
    <property type="entry name" value="TGS-like"/>
</dbReference>
<dbReference type="InterPro" id="IPR002320">
    <property type="entry name" value="Thr-tRNA-ligase_IIa"/>
</dbReference>
<dbReference type="InterPro" id="IPR018163">
    <property type="entry name" value="Thr/Ala-tRNA-synth_IIc_edit"/>
</dbReference>
<dbReference type="InterPro" id="IPR047246">
    <property type="entry name" value="ThrRS_anticodon"/>
</dbReference>
<dbReference type="InterPro" id="IPR033728">
    <property type="entry name" value="ThrRS_core"/>
</dbReference>
<dbReference type="InterPro" id="IPR012947">
    <property type="entry name" value="tRNA_SAD"/>
</dbReference>
<dbReference type="NCBIfam" id="TIGR00418">
    <property type="entry name" value="thrS"/>
    <property type="match status" value="1"/>
</dbReference>
<dbReference type="PANTHER" id="PTHR11451:SF44">
    <property type="entry name" value="THREONINE--TRNA LIGASE, CHLOROPLASTIC_MITOCHONDRIAL 2"/>
    <property type="match status" value="1"/>
</dbReference>
<dbReference type="PANTHER" id="PTHR11451">
    <property type="entry name" value="THREONINE-TRNA LIGASE"/>
    <property type="match status" value="1"/>
</dbReference>
<dbReference type="Pfam" id="PF03129">
    <property type="entry name" value="HGTP_anticodon"/>
    <property type="match status" value="1"/>
</dbReference>
<dbReference type="Pfam" id="PF02824">
    <property type="entry name" value="TGS"/>
    <property type="match status" value="1"/>
</dbReference>
<dbReference type="Pfam" id="PF00587">
    <property type="entry name" value="tRNA-synt_2b"/>
    <property type="match status" value="1"/>
</dbReference>
<dbReference type="Pfam" id="PF07973">
    <property type="entry name" value="tRNA_SAD"/>
    <property type="match status" value="1"/>
</dbReference>
<dbReference type="PRINTS" id="PR01047">
    <property type="entry name" value="TRNASYNTHTHR"/>
</dbReference>
<dbReference type="SMART" id="SM00863">
    <property type="entry name" value="tRNA_SAD"/>
    <property type="match status" value="1"/>
</dbReference>
<dbReference type="SUPFAM" id="SSF52954">
    <property type="entry name" value="Class II aaRS ABD-related"/>
    <property type="match status" value="1"/>
</dbReference>
<dbReference type="SUPFAM" id="SSF55681">
    <property type="entry name" value="Class II aaRS and biotin synthetases"/>
    <property type="match status" value="1"/>
</dbReference>
<dbReference type="SUPFAM" id="SSF81271">
    <property type="entry name" value="TGS-like"/>
    <property type="match status" value="1"/>
</dbReference>
<dbReference type="SUPFAM" id="SSF55186">
    <property type="entry name" value="ThrRS/AlaRS common domain"/>
    <property type="match status" value="1"/>
</dbReference>
<dbReference type="PROSITE" id="PS50862">
    <property type="entry name" value="AA_TRNA_LIGASE_II"/>
    <property type="match status" value="1"/>
</dbReference>
<dbReference type="PROSITE" id="PS51880">
    <property type="entry name" value="TGS"/>
    <property type="match status" value="1"/>
</dbReference>
<sequence length="642" mass="73329">MPVITLPDGSKREFANPVSTLDVAADIGPGLAKACIAGRVNGELKDACDIIETDSELSIITAKDEEGVEILRHSCAHLLGHAIKQLFPETKMAIGPVIDNGFYYDIDLDHKLTQEDIDALEKRMAALAKTNYAVDKRVVSWQEARDTFEARGEDYKMAILDENIPKDSTPALYHHEEYIDMCRGPHVPNMKFCQNFKLMSVAGAYWRGNSDNKMLQRVYGTAWADKKALKVHLNRLEEAAKRDHRKIGKQLDLYHMQEEAPGMVFWHNDGWSLFLELEKFIRQKLGQYTYQEVKGPLMMDRVLWERSGHWDKYSDAMFTTSSENREYAIKPMNCPGHVQIFNQGLKSYRDLPLRMAEFGCCHRNEPSGSLHGLMRVRGFTQDDAHIFCTEEQVQQEVSACIRMVYDTYATFGFSNIVVKLSTRPEKRIGDDDMWDRAEEALKKALKANDIEFEILPGEGAFYGPKIEFTLHDCLDRAWQCGTVQLDYALPGRLGATYVAEDNSRQTPVMIHRAILGSLERFLGILIEEYAGKFPAWLSPVQVVVMNITDKQSDYVDNVVNLFKEHGIRATKDLRNEKIGFKIREHTLRRVPYLLVVGDQEMENNEVAVRTREGVDLGKMQLEEFATKLKNQISLRSLNLLED</sequence>
<feature type="chain" id="PRO_1000077373" description="Threonine--tRNA ligase">
    <location>
        <begin position="1"/>
        <end position="642"/>
    </location>
</feature>
<feature type="domain" description="TGS" evidence="2">
    <location>
        <begin position="1"/>
        <end position="61"/>
    </location>
</feature>
<feature type="region of interest" description="Catalytic" evidence="1">
    <location>
        <begin position="243"/>
        <end position="534"/>
    </location>
</feature>
<feature type="binding site" evidence="1">
    <location>
        <position position="334"/>
    </location>
    <ligand>
        <name>Zn(2+)</name>
        <dbReference type="ChEBI" id="CHEBI:29105"/>
    </ligand>
</feature>
<feature type="binding site" evidence="1">
    <location>
        <position position="385"/>
    </location>
    <ligand>
        <name>Zn(2+)</name>
        <dbReference type="ChEBI" id="CHEBI:29105"/>
    </ligand>
</feature>
<feature type="binding site" evidence="1">
    <location>
        <position position="511"/>
    </location>
    <ligand>
        <name>Zn(2+)</name>
        <dbReference type="ChEBI" id="CHEBI:29105"/>
    </ligand>
</feature>
<proteinExistence type="inferred from homology"/>
<comment type="function">
    <text evidence="1">Catalyzes the attachment of threonine to tRNA(Thr) in a two-step reaction: L-threonine is first activated by ATP to form Thr-AMP and then transferred to the acceptor end of tRNA(Thr). Also edits incorrectly charged L-seryl-tRNA(Thr).</text>
</comment>
<comment type="catalytic activity">
    <reaction evidence="1">
        <text>tRNA(Thr) + L-threonine + ATP = L-threonyl-tRNA(Thr) + AMP + diphosphate + H(+)</text>
        <dbReference type="Rhea" id="RHEA:24624"/>
        <dbReference type="Rhea" id="RHEA-COMP:9670"/>
        <dbReference type="Rhea" id="RHEA-COMP:9704"/>
        <dbReference type="ChEBI" id="CHEBI:15378"/>
        <dbReference type="ChEBI" id="CHEBI:30616"/>
        <dbReference type="ChEBI" id="CHEBI:33019"/>
        <dbReference type="ChEBI" id="CHEBI:57926"/>
        <dbReference type="ChEBI" id="CHEBI:78442"/>
        <dbReference type="ChEBI" id="CHEBI:78534"/>
        <dbReference type="ChEBI" id="CHEBI:456215"/>
        <dbReference type="EC" id="6.1.1.3"/>
    </reaction>
</comment>
<comment type="cofactor">
    <cofactor evidence="1">
        <name>Zn(2+)</name>
        <dbReference type="ChEBI" id="CHEBI:29105"/>
    </cofactor>
    <text evidence="1">Binds 1 zinc ion per subunit.</text>
</comment>
<comment type="subunit">
    <text evidence="1">Homodimer.</text>
</comment>
<comment type="subcellular location">
    <subcellularLocation>
        <location evidence="1">Cytoplasm</location>
    </subcellularLocation>
</comment>
<comment type="similarity">
    <text evidence="1">Belongs to the class-II aminoacyl-tRNA synthetase family.</text>
</comment>
<name>SYT_SHEHH</name>
<reference key="1">
    <citation type="submission" date="2008-01" db="EMBL/GenBank/DDBJ databases">
        <title>Complete sequence of Shewanella halifaxensis HAW-EB4.</title>
        <authorList>
            <consortium name="US DOE Joint Genome Institute"/>
            <person name="Copeland A."/>
            <person name="Lucas S."/>
            <person name="Lapidus A."/>
            <person name="Glavina del Rio T."/>
            <person name="Dalin E."/>
            <person name="Tice H."/>
            <person name="Bruce D."/>
            <person name="Goodwin L."/>
            <person name="Pitluck S."/>
            <person name="Sims D."/>
            <person name="Brettin T."/>
            <person name="Detter J.C."/>
            <person name="Han C."/>
            <person name="Kuske C.R."/>
            <person name="Schmutz J."/>
            <person name="Larimer F."/>
            <person name="Land M."/>
            <person name="Hauser L."/>
            <person name="Kyrpides N."/>
            <person name="Kim E."/>
            <person name="Zhao J.-S."/>
            <person name="Richardson P."/>
        </authorList>
    </citation>
    <scope>NUCLEOTIDE SEQUENCE [LARGE SCALE GENOMIC DNA]</scope>
    <source>
        <strain>HAW-EB4</strain>
    </source>
</reference>
<protein>
    <recommendedName>
        <fullName evidence="1">Threonine--tRNA ligase</fullName>
        <ecNumber evidence="1">6.1.1.3</ecNumber>
    </recommendedName>
    <alternativeName>
        <fullName evidence="1">Threonyl-tRNA synthetase</fullName>
        <shortName evidence="1">ThrRS</shortName>
    </alternativeName>
</protein>
<accession>B0TT20</accession>
<gene>
    <name evidence="1" type="primary">thrS</name>
    <name type="ordered locus">Shal_2020</name>
</gene>
<organism>
    <name type="scientific">Shewanella halifaxensis (strain HAW-EB4)</name>
    <dbReference type="NCBI Taxonomy" id="458817"/>
    <lineage>
        <taxon>Bacteria</taxon>
        <taxon>Pseudomonadati</taxon>
        <taxon>Pseudomonadota</taxon>
        <taxon>Gammaproteobacteria</taxon>
        <taxon>Alteromonadales</taxon>
        <taxon>Shewanellaceae</taxon>
        <taxon>Shewanella</taxon>
    </lineage>
</organism>
<keyword id="KW-0030">Aminoacyl-tRNA synthetase</keyword>
<keyword id="KW-0067">ATP-binding</keyword>
<keyword id="KW-0963">Cytoplasm</keyword>
<keyword id="KW-0436">Ligase</keyword>
<keyword id="KW-0479">Metal-binding</keyword>
<keyword id="KW-0547">Nucleotide-binding</keyword>
<keyword id="KW-0648">Protein biosynthesis</keyword>
<keyword id="KW-0694">RNA-binding</keyword>
<keyword id="KW-0820">tRNA-binding</keyword>
<keyword id="KW-0862">Zinc</keyword>